<accession>Q54C02</accession>
<feature type="chain" id="PRO_0000327481" description="Ubiquitin-like modifier-activating enzyme 5">
    <location>
        <begin position="1"/>
        <end position="381"/>
    </location>
</feature>
<feature type="active site" description="Glycyl thioester intermediate" evidence="1">
    <location>
        <position position="219"/>
    </location>
</feature>
<feature type="binding site" evidence="1">
    <location>
        <position position="52"/>
    </location>
    <ligand>
        <name>ATP</name>
        <dbReference type="ChEBI" id="CHEBI:30616"/>
    </ligand>
</feature>
<feature type="binding site" evidence="1">
    <location>
        <position position="73"/>
    </location>
    <ligand>
        <name>ATP</name>
        <dbReference type="ChEBI" id="CHEBI:30616"/>
    </ligand>
</feature>
<feature type="binding site" evidence="1">
    <location>
        <position position="96"/>
    </location>
    <ligand>
        <name>ATP</name>
        <dbReference type="ChEBI" id="CHEBI:30616"/>
    </ligand>
</feature>
<feature type="binding site" evidence="1">
    <location>
        <position position="119"/>
    </location>
    <ligand>
        <name>ATP</name>
        <dbReference type="ChEBI" id="CHEBI:30616"/>
    </ligand>
</feature>
<feature type="binding site" evidence="1">
    <location>
        <position position="153"/>
    </location>
    <ligand>
        <name>ATP</name>
        <dbReference type="ChEBI" id="CHEBI:30616"/>
    </ligand>
</feature>
<feature type="binding site" evidence="1">
    <location>
        <position position="195"/>
    </location>
    <ligand>
        <name>Zn(2+)</name>
        <dbReference type="ChEBI" id="CHEBI:29105"/>
    </ligand>
</feature>
<feature type="binding site" evidence="1">
    <location>
        <position position="198"/>
    </location>
    <ligand>
        <name>Zn(2+)</name>
        <dbReference type="ChEBI" id="CHEBI:29105"/>
    </ligand>
</feature>
<feature type="binding site" evidence="1">
    <location>
        <position position="272"/>
    </location>
    <ligand>
        <name>Zn(2+)</name>
        <dbReference type="ChEBI" id="CHEBI:29105"/>
    </ligand>
</feature>
<feature type="binding site" evidence="1">
    <location>
        <position position="277"/>
    </location>
    <ligand>
        <name>Zn(2+)</name>
        <dbReference type="ChEBI" id="CHEBI:29105"/>
    </ligand>
</feature>
<dbReference type="EMBL" id="AAFI02000201">
    <property type="protein sequence ID" value="EAL60777.1"/>
    <property type="molecule type" value="Genomic_DNA"/>
</dbReference>
<dbReference type="RefSeq" id="XP_629189.1">
    <property type="nucleotide sequence ID" value="XM_629187.1"/>
</dbReference>
<dbReference type="SMR" id="Q54C02"/>
<dbReference type="FunCoup" id="Q54C02">
    <property type="interactions" value="804"/>
</dbReference>
<dbReference type="STRING" id="44689.Q54C02"/>
<dbReference type="PaxDb" id="44689-DDB0232142"/>
<dbReference type="EnsemblProtists" id="EAL60777">
    <property type="protein sequence ID" value="EAL60777"/>
    <property type="gene ID" value="DDB_G0293306"/>
</dbReference>
<dbReference type="GeneID" id="8629148"/>
<dbReference type="KEGG" id="ddi:DDB_G0293306"/>
<dbReference type="dictyBase" id="DDB_G0293306">
    <property type="gene designation" value="uba5"/>
</dbReference>
<dbReference type="VEuPathDB" id="AmoebaDB:DDB_G0293306"/>
<dbReference type="eggNOG" id="KOG2336">
    <property type="taxonomic scope" value="Eukaryota"/>
</dbReference>
<dbReference type="HOGENOM" id="CLU_013325_0_1_1"/>
<dbReference type="InParanoid" id="Q54C02"/>
<dbReference type="OMA" id="MNIVKDY"/>
<dbReference type="PhylomeDB" id="Q54C02"/>
<dbReference type="Reactome" id="R-DDI-983168">
    <property type="pathway name" value="Antigen processing: Ubiquitination &amp; Proteasome degradation"/>
</dbReference>
<dbReference type="PRO" id="PR:Q54C02"/>
<dbReference type="Proteomes" id="UP000002195">
    <property type="component" value="Chromosome 6"/>
</dbReference>
<dbReference type="GO" id="GO:0005737">
    <property type="term" value="C:cytoplasm"/>
    <property type="evidence" value="ECO:0000318"/>
    <property type="project" value="GO_Central"/>
</dbReference>
<dbReference type="GO" id="GO:0005829">
    <property type="term" value="C:cytosol"/>
    <property type="evidence" value="ECO:0000318"/>
    <property type="project" value="GO_Central"/>
</dbReference>
<dbReference type="GO" id="GO:0005524">
    <property type="term" value="F:ATP binding"/>
    <property type="evidence" value="ECO:0007669"/>
    <property type="project" value="UniProtKB-KW"/>
</dbReference>
<dbReference type="GO" id="GO:0046872">
    <property type="term" value="F:metal ion binding"/>
    <property type="evidence" value="ECO:0007669"/>
    <property type="project" value="UniProtKB-KW"/>
</dbReference>
<dbReference type="GO" id="GO:0071566">
    <property type="term" value="F:UFM1 activating enzyme activity"/>
    <property type="evidence" value="ECO:0000318"/>
    <property type="project" value="GO_Central"/>
</dbReference>
<dbReference type="GO" id="GO:0071569">
    <property type="term" value="P:protein ufmylation"/>
    <property type="evidence" value="ECO:0000318"/>
    <property type="project" value="GO_Central"/>
</dbReference>
<dbReference type="CDD" id="cd00757">
    <property type="entry name" value="ThiF_MoeB_HesA_family"/>
    <property type="match status" value="1"/>
</dbReference>
<dbReference type="FunFam" id="3.40.50.720:FF:000066">
    <property type="entry name" value="Putative ubiquitin-like modifier-activating enzyme 5"/>
    <property type="match status" value="1"/>
</dbReference>
<dbReference type="Gene3D" id="3.40.50.720">
    <property type="entry name" value="NAD(P)-binding Rossmann-like Domain"/>
    <property type="match status" value="1"/>
</dbReference>
<dbReference type="InterPro" id="IPR045886">
    <property type="entry name" value="ThiF/MoeB/HesA"/>
</dbReference>
<dbReference type="InterPro" id="IPR000594">
    <property type="entry name" value="ThiF_NAD_FAD-bd"/>
</dbReference>
<dbReference type="InterPro" id="IPR035985">
    <property type="entry name" value="Ubiquitin-activating_enz"/>
</dbReference>
<dbReference type="PANTHER" id="PTHR10953">
    <property type="entry name" value="UBIQUITIN-ACTIVATING ENZYME E1"/>
    <property type="match status" value="1"/>
</dbReference>
<dbReference type="PANTHER" id="PTHR10953:SF9">
    <property type="entry name" value="UBIQUITIN-LIKE MODIFIER-ACTIVATING ENZYME 5"/>
    <property type="match status" value="1"/>
</dbReference>
<dbReference type="Pfam" id="PF00899">
    <property type="entry name" value="ThiF"/>
    <property type="match status" value="1"/>
</dbReference>
<dbReference type="SUPFAM" id="SSF69572">
    <property type="entry name" value="Activating enzymes of the ubiquitin-like proteins"/>
    <property type="match status" value="1"/>
</dbReference>
<sequence>MATPYREKIEKMSSEVIDSNPYSRLMALKKMGIVNNYENIRNLSVIIVGLGGIGSVAAEMLTRCGIGKLLLFDYDTVEIANMNRLFFRPEQSGKSKTMAAQETLSSINPDVQFESHNYNITTIDNFEHFKGRIEKGGLVEGEPVDLVLGCVDNFEARTAINQACLELGKSWMESGVSENAISGHIQLIIPGESACFQCVPPLIVASGIDERTLKREGVCAASLPTTMGIVAGMLVQNTLKYLLKFGEVSSLLGYNALLDYFPKDNMKPNPECSNSFCIIHQQKYKEFLKNNPKENLIQNNNNNNINNNEKKSTYENEWGIELIETSEDFNNNNNNNNKPSNNSFEFSYDKKPTVELNEQSTVKVNSSSNLEDLMNQLKNMK</sequence>
<protein>
    <recommendedName>
        <fullName>Ubiquitin-like modifier-activating enzyme 5</fullName>
        <shortName>Ubiquitin-activating enzyme 5</shortName>
    </recommendedName>
</protein>
<gene>
    <name type="primary">uba5</name>
    <name type="ORF">DDB_G0293306</name>
</gene>
<name>UBA5_DICDI</name>
<proteinExistence type="inferred from homology"/>
<reference key="1">
    <citation type="journal article" date="2005" name="Nature">
        <title>The genome of the social amoeba Dictyostelium discoideum.</title>
        <authorList>
            <person name="Eichinger L."/>
            <person name="Pachebat J.A."/>
            <person name="Gloeckner G."/>
            <person name="Rajandream M.A."/>
            <person name="Sucgang R."/>
            <person name="Berriman M."/>
            <person name="Song J."/>
            <person name="Olsen R."/>
            <person name="Szafranski K."/>
            <person name="Xu Q."/>
            <person name="Tunggal B."/>
            <person name="Kummerfeld S."/>
            <person name="Madera M."/>
            <person name="Konfortov B.A."/>
            <person name="Rivero F."/>
            <person name="Bankier A.T."/>
            <person name="Lehmann R."/>
            <person name="Hamlin N."/>
            <person name="Davies R."/>
            <person name="Gaudet P."/>
            <person name="Fey P."/>
            <person name="Pilcher K."/>
            <person name="Chen G."/>
            <person name="Saunders D."/>
            <person name="Sodergren E.J."/>
            <person name="Davis P."/>
            <person name="Kerhornou A."/>
            <person name="Nie X."/>
            <person name="Hall N."/>
            <person name="Anjard C."/>
            <person name="Hemphill L."/>
            <person name="Bason N."/>
            <person name="Farbrother P."/>
            <person name="Desany B."/>
            <person name="Just E."/>
            <person name="Morio T."/>
            <person name="Rost R."/>
            <person name="Churcher C.M."/>
            <person name="Cooper J."/>
            <person name="Haydock S."/>
            <person name="van Driessche N."/>
            <person name="Cronin A."/>
            <person name="Goodhead I."/>
            <person name="Muzny D.M."/>
            <person name="Mourier T."/>
            <person name="Pain A."/>
            <person name="Lu M."/>
            <person name="Harper D."/>
            <person name="Lindsay R."/>
            <person name="Hauser H."/>
            <person name="James K.D."/>
            <person name="Quiles M."/>
            <person name="Madan Babu M."/>
            <person name="Saito T."/>
            <person name="Buchrieser C."/>
            <person name="Wardroper A."/>
            <person name="Felder M."/>
            <person name="Thangavelu M."/>
            <person name="Johnson D."/>
            <person name="Knights A."/>
            <person name="Loulseged H."/>
            <person name="Mungall K.L."/>
            <person name="Oliver K."/>
            <person name="Price C."/>
            <person name="Quail M.A."/>
            <person name="Urushihara H."/>
            <person name="Hernandez J."/>
            <person name="Rabbinowitsch E."/>
            <person name="Steffen D."/>
            <person name="Sanders M."/>
            <person name="Ma J."/>
            <person name="Kohara Y."/>
            <person name="Sharp S."/>
            <person name="Simmonds M.N."/>
            <person name="Spiegler S."/>
            <person name="Tivey A."/>
            <person name="Sugano S."/>
            <person name="White B."/>
            <person name="Walker D."/>
            <person name="Woodward J.R."/>
            <person name="Winckler T."/>
            <person name="Tanaka Y."/>
            <person name="Shaulsky G."/>
            <person name="Schleicher M."/>
            <person name="Weinstock G.M."/>
            <person name="Rosenthal A."/>
            <person name="Cox E.C."/>
            <person name="Chisholm R.L."/>
            <person name="Gibbs R.A."/>
            <person name="Loomis W.F."/>
            <person name="Platzer M."/>
            <person name="Kay R.R."/>
            <person name="Williams J.G."/>
            <person name="Dear P.H."/>
            <person name="Noegel A.A."/>
            <person name="Barrell B.G."/>
            <person name="Kuspa A."/>
        </authorList>
    </citation>
    <scope>NUCLEOTIDE SEQUENCE [LARGE SCALE GENOMIC DNA]</scope>
    <source>
        <strain>AX4</strain>
    </source>
</reference>
<comment type="function">
    <text evidence="1">E1-like enzyme which activates ufm1.</text>
</comment>
<comment type="similarity">
    <text evidence="2">Belongs to the ubiquitin-activating E1 family. UBA5 subfamily.</text>
</comment>
<evidence type="ECO:0000250" key="1">
    <source>
        <dbReference type="UniProtKB" id="Q9GZZ9"/>
    </source>
</evidence>
<evidence type="ECO:0000305" key="2"/>
<keyword id="KW-0067">ATP-binding</keyword>
<keyword id="KW-0479">Metal-binding</keyword>
<keyword id="KW-0547">Nucleotide-binding</keyword>
<keyword id="KW-1185">Reference proteome</keyword>
<keyword id="KW-0833">Ubl conjugation pathway</keyword>
<keyword id="KW-0862">Zinc</keyword>
<organism>
    <name type="scientific">Dictyostelium discoideum</name>
    <name type="common">Social amoeba</name>
    <dbReference type="NCBI Taxonomy" id="44689"/>
    <lineage>
        <taxon>Eukaryota</taxon>
        <taxon>Amoebozoa</taxon>
        <taxon>Evosea</taxon>
        <taxon>Eumycetozoa</taxon>
        <taxon>Dictyostelia</taxon>
        <taxon>Dictyosteliales</taxon>
        <taxon>Dictyosteliaceae</taxon>
        <taxon>Dictyostelium</taxon>
    </lineage>
</organism>